<gene>
    <name type="primary">yhfW</name>
    <name type="ordered locus">BSU10390</name>
</gene>
<sequence length="509" mass="57110">MANQHFAKEAPETYWKTSTDLPSFPALQEDTECDVTIIGGGITGITTAYELTKRGFRVVLIEANQVLNGTTAHTTAKVTAQHDMIYDEFIRHFGLNHARLYYEANQNAIDYIKGIVDEHQIDCEWIEQDAYLYTANENAVQKIHTEHEAYTKLGIERDLIKDLPIPLGSKLALVMKNQAQFHPLQYLKALLEQIVQKGGRIYEETVALDIKKGERPEVVTKSRHAIKSRFIICCSHFPFYDGGGLYAARMYSDRSYVLAIKPKIEYPEGMYLSIDQPSVALRYTVVNGEKLILFSGVSHKTGQGKAMSTHYETLRQLAESTIGIESIPYYWSTQDLVTIDKIPFIGPMSENEDNILVATGFKKWGMTSSAVAATLLSDLVEKKENPYESIFTPSRFHLNPGLQKVISYNADVAKHLIKGKLEKPDVQFEDISPGEGKAVTINGRRAGAFRDETGCLHLVDTTCTHLGCEVEWNDSEHTWDCPCHGSRFKPSGEVVEGPAIKPLKQIDLD</sequence>
<name>YHFW_BACSU</name>
<reference key="1">
    <citation type="submission" date="1997-06" db="EMBL/GenBank/DDBJ databases">
        <authorList>
            <person name="Noback M.A."/>
            <person name="Terpstra P."/>
            <person name="Holsappel S."/>
            <person name="Venema G."/>
            <person name="Bron S."/>
        </authorList>
    </citation>
    <scope>NUCLEOTIDE SEQUENCE [GENOMIC DNA]</scope>
    <source>
        <strain>168</strain>
    </source>
</reference>
<reference key="2">
    <citation type="journal article" date="1997" name="Nature">
        <title>The complete genome sequence of the Gram-positive bacterium Bacillus subtilis.</title>
        <authorList>
            <person name="Kunst F."/>
            <person name="Ogasawara N."/>
            <person name="Moszer I."/>
            <person name="Albertini A.M."/>
            <person name="Alloni G."/>
            <person name="Azevedo V."/>
            <person name="Bertero M.G."/>
            <person name="Bessieres P."/>
            <person name="Bolotin A."/>
            <person name="Borchert S."/>
            <person name="Borriss R."/>
            <person name="Boursier L."/>
            <person name="Brans A."/>
            <person name="Braun M."/>
            <person name="Brignell S.C."/>
            <person name="Bron S."/>
            <person name="Brouillet S."/>
            <person name="Bruschi C.V."/>
            <person name="Caldwell B."/>
            <person name="Capuano V."/>
            <person name="Carter N.M."/>
            <person name="Choi S.-K."/>
            <person name="Codani J.-J."/>
            <person name="Connerton I.F."/>
            <person name="Cummings N.J."/>
            <person name="Daniel R.A."/>
            <person name="Denizot F."/>
            <person name="Devine K.M."/>
            <person name="Duesterhoeft A."/>
            <person name="Ehrlich S.D."/>
            <person name="Emmerson P.T."/>
            <person name="Entian K.-D."/>
            <person name="Errington J."/>
            <person name="Fabret C."/>
            <person name="Ferrari E."/>
            <person name="Foulger D."/>
            <person name="Fritz C."/>
            <person name="Fujita M."/>
            <person name="Fujita Y."/>
            <person name="Fuma S."/>
            <person name="Galizzi A."/>
            <person name="Galleron N."/>
            <person name="Ghim S.-Y."/>
            <person name="Glaser P."/>
            <person name="Goffeau A."/>
            <person name="Golightly E.J."/>
            <person name="Grandi G."/>
            <person name="Guiseppi G."/>
            <person name="Guy B.J."/>
            <person name="Haga K."/>
            <person name="Haiech J."/>
            <person name="Harwood C.R."/>
            <person name="Henaut A."/>
            <person name="Hilbert H."/>
            <person name="Holsappel S."/>
            <person name="Hosono S."/>
            <person name="Hullo M.-F."/>
            <person name="Itaya M."/>
            <person name="Jones L.-M."/>
            <person name="Joris B."/>
            <person name="Karamata D."/>
            <person name="Kasahara Y."/>
            <person name="Klaerr-Blanchard M."/>
            <person name="Klein C."/>
            <person name="Kobayashi Y."/>
            <person name="Koetter P."/>
            <person name="Koningstein G."/>
            <person name="Krogh S."/>
            <person name="Kumano M."/>
            <person name="Kurita K."/>
            <person name="Lapidus A."/>
            <person name="Lardinois S."/>
            <person name="Lauber J."/>
            <person name="Lazarevic V."/>
            <person name="Lee S.-M."/>
            <person name="Levine A."/>
            <person name="Liu H."/>
            <person name="Masuda S."/>
            <person name="Mauel C."/>
            <person name="Medigue C."/>
            <person name="Medina N."/>
            <person name="Mellado R.P."/>
            <person name="Mizuno M."/>
            <person name="Moestl D."/>
            <person name="Nakai S."/>
            <person name="Noback M."/>
            <person name="Noone D."/>
            <person name="O'Reilly M."/>
            <person name="Ogawa K."/>
            <person name="Ogiwara A."/>
            <person name="Oudega B."/>
            <person name="Park S.-H."/>
            <person name="Parro V."/>
            <person name="Pohl T.M."/>
            <person name="Portetelle D."/>
            <person name="Porwollik S."/>
            <person name="Prescott A.M."/>
            <person name="Presecan E."/>
            <person name="Pujic P."/>
            <person name="Purnelle B."/>
            <person name="Rapoport G."/>
            <person name="Rey M."/>
            <person name="Reynolds S."/>
            <person name="Rieger M."/>
            <person name="Rivolta C."/>
            <person name="Rocha E."/>
            <person name="Roche B."/>
            <person name="Rose M."/>
            <person name="Sadaie Y."/>
            <person name="Sato T."/>
            <person name="Scanlan E."/>
            <person name="Schleich S."/>
            <person name="Schroeter R."/>
            <person name="Scoffone F."/>
            <person name="Sekiguchi J."/>
            <person name="Sekowska A."/>
            <person name="Seror S.J."/>
            <person name="Serror P."/>
            <person name="Shin B.-S."/>
            <person name="Soldo B."/>
            <person name="Sorokin A."/>
            <person name="Tacconi E."/>
            <person name="Takagi T."/>
            <person name="Takahashi H."/>
            <person name="Takemaru K."/>
            <person name="Takeuchi M."/>
            <person name="Tamakoshi A."/>
            <person name="Tanaka T."/>
            <person name="Terpstra P."/>
            <person name="Tognoni A."/>
            <person name="Tosato V."/>
            <person name="Uchiyama S."/>
            <person name="Vandenbol M."/>
            <person name="Vannier F."/>
            <person name="Vassarotti A."/>
            <person name="Viari A."/>
            <person name="Wambutt R."/>
            <person name="Wedler E."/>
            <person name="Wedler H."/>
            <person name="Weitzenegger T."/>
            <person name="Winters P."/>
            <person name="Wipat A."/>
            <person name="Yamamoto H."/>
            <person name="Yamane K."/>
            <person name="Yasumoto K."/>
            <person name="Yata K."/>
            <person name="Yoshida K."/>
            <person name="Yoshikawa H.-F."/>
            <person name="Zumstein E."/>
            <person name="Yoshikawa H."/>
            <person name="Danchin A."/>
        </authorList>
    </citation>
    <scope>NUCLEOTIDE SEQUENCE [LARGE SCALE GENOMIC DNA]</scope>
    <source>
        <strain>168</strain>
    </source>
</reference>
<evidence type="ECO:0000255" key="1">
    <source>
        <dbReference type="PROSITE-ProRule" id="PRU00628"/>
    </source>
</evidence>
<evidence type="ECO:0000305" key="2"/>
<keyword id="KW-0001">2Fe-2S</keyword>
<keyword id="KW-1015">Disulfide bond</keyword>
<keyword id="KW-0408">Iron</keyword>
<keyword id="KW-0411">Iron-sulfur</keyword>
<keyword id="KW-0479">Metal-binding</keyword>
<keyword id="KW-0560">Oxidoreductase</keyword>
<keyword id="KW-1185">Reference proteome</keyword>
<protein>
    <recommendedName>
        <fullName>Putative Rieske 2Fe-2S iron-sulfur protein YhfW</fullName>
        <ecNumber>1.-.-.-</ecNumber>
    </recommendedName>
</protein>
<feature type="chain" id="PRO_0000382895" description="Putative Rieske 2Fe-2S iron-sulfur protein YhfW">
    <location>
        <begin position="1"/>
        <end position="509"/>
    </location>
</feature>
<feature type="domain" description="Rieske" evidence="1">
    <location>
        <begin position="423"/>
        <end position="509"/>
    </location>
</feature>
<feature type="binding site" evidence="1">
    <location>
        <position position="463"/>
    </location>
    <ligand>
        <name>[2Fe-2S] cluster</name>
        <dbReference type="ChEBI" id="CHEBI:190135"/>
    </ligand>
</feature>
<feature type="binding site" evidence="1">
    <location>
        <position position="465"/>
    </location>
    <ligand>
        <name>[2Fe-2S] cluster</name>
        <dbReference type="ChEBI" id="CHEBI:190135"/>
    </ligand>
</feature>
<feature type="binding site" evidence="1">
    <location>
        <position position="481"/>
    </location>
    <ligand>
        <name>[2Fe-2S] cluster</name>
        <dbReference type="ChEBI" id="CHEBI:190135"/>
    </ligand>
</feature>
<feature type="binding site" evidence="1">
    <location>
        <position position="484"/>
    </location>
    <ligand>
        <name>[2Fe-2S] cluster</name>
        <dbReference type="ChEBI" id="CHEBI:190135"/>
    </ligand>
</feature>
<feature type="disulfide bond" evidence="1">
    <location>
        <begin position="468"/>
        <end position="483"/>
    </location>
</feature>
<proteinExistence type="inferred from homology"/>
<organism>
    <name type="scientific">Bacillus subtilis (strain 168)</name>
    <dbReference type="NCBI Taxonomy" id="224308"/>
    <lineage>
        <taxon>Bacteria</taxon>
        <taxon>Bacillati</taxon>
        <taxon>Bacillota</taxon>
        <taxon>Bacilli</taxon>
        <taxon>Bacillales</taxon>
        <taxon>Bacillaceae</taxon>
        <taxon>Bacillus</taxon>
    </lineage>
</organism>
<comment type="cofactor">
    <cofactor evidence="1">
        <name>[2Fe-2S] cluster</name>
        <dbReference type="ChEBI" id="CHEBI:190135"/>
    </cofactor>
    <text evidence="1">Binds 1 [2Fe-2S] cluster per subunit.</text>
</comment>
<comment type="similarity">
    <text evidence="2">Belongs to the Rieske iron-sulfur protein family.</text>
</comment>
<accession>O07622</accession>
<accession>Q796T1</accession>
<dbReference type="EC" id="1.-.-.-"/>
<dbReference type="EMBL" id="Y14084">
    <property type="protein sequence ID" value="CAA74546.1"/>
    <property type="molecule type" value="Genomic_DNA"/>
</dbReference>
<dbReference type="EMBL" id="AL009126">
    <property type="protein sequence ID" value="CAB12879.1"/>
    <property type="molecule type" value="Genomic_DNA"/>
</dbReference>
<dbReference type="PIR" id="D69832">
    <property type="entry name" value="D69832"/>
</dbReference>
<dbReference type="RefSeq" id="NP_388920.1">
    <property type="nucleotide sequence ID" value="NC_000964.3"/>
</dbReference>
<dbReference type="RefSeq" id="WP_003245031.1">
    <property type="nucleotide sequence ID" value="NZ_OZ025638.1"/>
</dbReference>
<dbReference type="SMR" id="O07622"/>
<dbReference type="FunCoup" id="O07622">
    <property type="interactions" value="49"/>
</dbReference>
<dbReference type="STRING" id="224308.BSU10390"/>
<dbReference type="PaxDb" id="224308-BSU10390"/>
<dbReference type="DNASU" id="936319"/>
<dbReference type="EnsemblBacteria" id="CAB12879">
    <property type="protein sequence ID" value="CAB12879"/>
    <property type="gene ID" value="BSU_10390"/>
</dbReference>
<dbReference type="GeneID" id="936319"/>
<dbReference type="KEGG" id="bsu:BSU10390"/>
<dbReference type="PATRIC" id="fig|224308.179.peg.1117"/>
<dbReference type="eggNOG" id="COG0665">
    <property type="taxonomic scope" value="Bacteria"/>
</dbReference>
<dbReference type="eggNOG" id="COG0723">
    <property type="taxonomic scope" value="Bacteria"/>
</dbReference>
<dbReference type="InParanoid" id="O07622"/>
<dbReference type="OrthoDB" id="9767869at2"/>
<dbReference type="PhylomeDB" id="O07622"/>
<dbReference type="BioCyc" id="BSUB:BSU10390-MONOMER"/>
<dbReference type="Proteomes" id="UP000001570">
    <property type="component" value="Chromosome"/>
</dbReference>
<dbReference type="GO" id="GO:0005737">
    <property type="term" value="C:cytoplasm"/>
    <property type="evidence" value="ECO:0000318"/>
    <property type="project" value="GO_Central"/>
</dbReference>
<dbReference type="GO" id="GO:0016020">
    <property type="term" value="C:membrane"/>
    <property type="evidence" value="ECO:0007669"/>
    <property type="project" value="InterPro"/>
</dbReference>
<dbReference type="GO" id="GO:0051537">
    <property type="term" value="F:2 iron, 2 sulfur cluster binding"/>
    <property type="evidence" value="ECO:0007669"/>
    <property type="project" value="UniProtKB-KW"/>
</dbReference>
<dbReference type="GO" id="GO:0046872">
    <property type="term" value="F:metal ion binding"/>
    <property type="evidence" value="ECO:0007669"/>
    <property type="project" value="UniProtKB-KW"/>
</dbReference>
<dbReference type="GO" id="GO:0004497">
    <property type="term" value="F:monooxygenase activity"/>
    <property type="evidence" value="ECO:0007669"/>
    <property type="project" value="UniProtKB-ARBA"/>
</dbReference>
<dbReference type="GO" id="GO:0016705">
    <property type="term" value="F:oxidoreductase activity, acting on paired donors, with incorporation or reduction of molecular oxygen"/>
    <property type="evidence" value="ECO:0007669"/>
    <property type="project" value="UniProtKB-ARBA"/>
</dbReference>
<dbReference type="CDD" id="cd03477">
    <property type="entry name" value="Rieske_YhfW_C"/>
    <property type="match status" value="1"/>
</dbReference>
<dbReference type="FunFam" id="2.102.10.10:FF:000014">
    <property type="entry name" value="Oxidoreductase, FAD dependent"/>
    <property type="match status" value="1"/>
</dbReference>
<dbReference type="Gene3D" id="3.30.9.10">
    <property type="entry name" value="D-Amino Acid Oxidase, subunit A, domain 2"/>
    <property type="match status" value="1"/>
</dbReference>
<dbReference type="Gene3D" id="3.50.50.60">
    <property type="entry name" value="FAD/NAD(P)-binding domain"/>
    <property type="match status" value="1"/>
</dbReference>
<dbReference type="Gene3D" id="2.102.10.10">
    <property type="entry name" value="Rieske [2Fe-2S] iron-sulphur domain"/>
    <property type="match status" value="1"/>
</dbReference>
<dbReference type="InterPro" id="IPR006076">
    <property type="entry name" value="FAD-dep_OxRdtase"/>
</dbReference>
<dbReference type="InterPro" id="IPR036188">
    <property type="entry name" value="FAD/NAD-bd_sf"/>
</dbReference>
<dbReference type="InterPro" id="IPR017941">
    <property type="entry name" value="Rieske_2Fe-2S"/>
</dbReference>
<dbReference type="InterPro" id="IPR036922">
    <property type="entry name" value="Rieske_2Fe-2S_sf"/>
</dbReference>
<dbReference type="InterPro" id="IPR005805">
    <property type="entry name" value="Rieske_Fe-S_prot_C"/>
</dbReference>
<dbReference type="InterPro" id="IPR038010">
    <property type="entry name" value="YhfW_C"/>
</dbReference>
<dbReference type="PANTHER" id="PTHR13847:SF274">
    <property type="entry name" value="RIESKE 2FE-2S IRON-SULFUR PROTEIN YHFW-RELATED"/>
    <property type="match status" value="1"/>
</dbReference>
<dbReference type="PANTHER" id="PTHR13847">
    <property type="entry name" value="SARCOSINE DEHYDROGENASE-RELATED"/>
    <property type="match status" value="1"/>
</dbReference>
<dbReference type="Pfam" id="PF01266">
    <property type="entry name" value="DAO"/>
    <property type="match status" value="1"/>
</dbReference>
<dbReference type="Pfam" id="PF00355">
    <property type="entry name" value="Rieske"/>
    <property type="match status" value="1"/>
</dbReference>
<dbReference type="PRINTS" id="PR00162">
    <property type="entry name" value="RIESKE"/>
</dbReference>
<dbReference type="SUPFAM" id="SSF50022">
    <property type="entry name" value="ISP domain"/>
    <property type="match status" value="1"/>
</dbReference>
<dbReference type="SUPFAM" id="SSF51971">
    <property type="entry name" value="Nucleotide-binding domain"/>
    <property type="match status" value="1"/>
</dbReference>
<dbReference type="PROSITE" id="PS51296">
    <property type="entry name" value="RIESKE"/>
    <property type="match status" value="1"/>
</dbReference>